<protein>
    <recommendedName>
        <fullName>Aspartyl aminopeptidase</fullName>
        <shortName>DAP</shortName>
        <ecNumber>3.4.11.21</ecNumber>
    </recommendedName>
</protein>
<organism>
    <name type="scientific">Aspergillus oryzae (strain ATCC 42149 / RIB 40)</name>
    <name type="common">Yellow koji mold</name>
    <dbReference type="NCBI Taxonomy" id="510516"/>
    <lineage>
        <taxon>Eukaryota</taxon>
        <taxon>Fungi</taxon>
        <taxon>Dikarya</taxon>
        <taxon>Ascomycota</taxon>
        <taxon>Pezizomycotina</taxon>
        <taxon>Eurotiomycetes</taxon>
        <taxon>Eurotiomycetidae</taxon>
        <taxon>Eurotiales</taxon>
        <taxon>Aspergillaceae</taxon>
        <taxon>Aspergillus</taxon>
        <taxon>Aspergillus subgen. Circumdati</taxon>
    </lineage>
</organism>
<sequence>MTSKIAQNLKQPALDFLSFVNASPTPFHAVQSAKELLSKAGFQEIKEKDSWSSTCRPGGKYYLTRNSSTIVAFAIGKKWKPGNPISMIGAHTDSPVLRIKPVSNKRGEGFVQVGVETYGGGIWHTWFDRDLGVAGRAMVRTGDGSIVQKLVKIDRPILRIPTLAIHLDRQETFAFNKETQLFPIAGLVAAELNRTADSTATGEKTAANNETEKGDFAPLKSVTERHHPYLVELIAAEAGVKPDDILDFEMILFDTQKSCLGGLLEEFVFSPRLDNLNSSFCATVGLIDSVADASALDDEPSIRLIALFDHEEIGSRTAQGADSNVLPAIIRRLSVLPSSTSGNEDLATAFEETLSTSFLLSADMAHAVHPNYAAKYENDHRPEINKGPVIKINANARYATNSPGIVLLQEVARKAAEDGGEGVPLQLFVVRNDSSCGSTIGPMLSAALGARTLDLGNPQLSMHSIRETGGTYDVGHSIRLFTSFFKHYSNTSKTIFVD</sequence>
<comment type="catalytic activity">
    <reaction evidence="3">
        <text>Release of an N-terminal aspartate or glutamate from a peptide, with a preference for aspartate.</text>
        <dbReference type="EC" id="3.4.11.21"/>
    </reaction>
</comment>
<comment type="cofactor">
    <cofactor evidence="1">
        <name>Zn(2+)</name>
        <dbReference type="ChEBI" id="CHEBI:29105"/>
    </cofactor>
    <text evidence="1">Binds 2 Zn(2+) ions per subunit.</text>
</comment>
<comment type="activity regulation">
    <text evidence="3">Inhibited by zinc. Stimulated by calcium and bacitracin.</text>
</comment>
<comment type="biophysicochemical properties">
    <kinetics>
        <KM evidence="2 3">0.78 mM for Asp-pNA</KM>
        <KM evidence="2 3">0.068 mM for angiotensin II</KM>
    </kinetics>
    <phDependence>
        <text evidence="2 3">Optimum pH is 7.5.</text>
    </phDependence>
    <temperatureDependence>
        <text evidence="2 3">Optimum temperature is 50 degrees Celsius.</text>
    </temperatureDependence>
</comment>
<comment type="subunit">
    <text evidence="1">Tetrahedron-shaped homododecamer built from six homodimers.</text>
</comment>
<comment type="PTM">
    <text>The N-terminus is blocked.</text>
</comment>
<comment type="similarity">
    <text evidence="4">Belongs to the peptidase M18 family.</text>
</comment>
<gene>
    <name type="primary">dapA</name>
    <name type="ORF">AO090005001447</name>
</gene>
<proteinExistence type="evidence at protein level"/>
<accession>Q2UPZ7</accession>
<reference key="1">
    <citation type="journal article" date="2005" name="Nature">
        <title>Genome sequencing and analysis of Aspergillus oryzae.</title>
        <authorList>
            <person name="Machida M."/>
            <person name="Asai K."/>
            <person name="Sano M."/>
            <person name="Tanaka T."/>
            <person name="Kumagai T."/>
            <person name="Terai G."/>
            <person name="Kusumoto K."/>
            <person name="Arima T."/>
            <person name="Akita O."/>
            <person name="Kashiwagi Y."/>
            <person name="Abe K."/>
            <person name="Gomi K."/>
            <person name="Horiuchi H."/>
            <person name="Kitamoto K."/>
            <person name="Kobayashi T."/>
            <person name="Takeuchi M."/>
            <person name="Denning D.W."/>
            <person name="Galagan J.E."/>
            <person name="Nierman W.C."/>
            <person name="Yu J."/>
            <person name="Archer D.B."/>
            <person name="Bennett J.W."/>
            <person name="Bhatnagar D."/>
            <person name="Cleveland T.E."/>
            <person name="Fedorova N.D."/>
            <person name="Gotoh O."/>
            <person name="Horikawa H."/>
            <person name="Hosoyama A."/>
            <person name="Ichinomiya M."/>
            <person name="Igarashi R."/>
            <person name="Iwashita K."/>
            <person name="Juvvadi P.R."/>
            <person name="Kato M."/>
            <person name="Kato Y."/>
            <person name="Kin T."/>
            <person name="Kokubun A."/>
            <person name="Maeda H."/>
            <person name="Maeyama N."/>
            <person name="Maruyama J."/>
            <person name="Nagasaki H."/>
            <person name="Nakajima T."/>
            <person name="Oda K."/>
            <person name="Okada K."/>
            <person name="Paulsen I."/>
            <person name="Sakamoto K."/>
            <person name="Sawano T."/>
            <person name="Takahashi M."/>
            <person name="Takase K."/>
            <person name="Terabayashi Y."/>
            <person name="Wortman J.R."/>
            <person name="Yamada O."/>
            <person name="Yamagata Y."/>
            <person name="Anazawa H."/>
            <person name="Hata Y."/>
            <person name="Koide Y."/>
            <person name="Komori T."/>
            <person name="Koyama Y."/>
            <person name="Minetoki T."/>
            <person name="Suharnan S."/>
            <person name="Tanaka A."/>
            <person name="Isono K."/>
            <person name="Kuhara S."/>
            <person name="Ogasawara N."/>
            <person name="Kikuchi H."/>
        </authorList>
    </citation>
    <scope>NUCLEOTIDE SEQUENCE [LARGE SCALE GENOMIC DNA]</scope>
    <source>
        <strain>ATCC 42149 / RIB 40</strain>
    </source>
</reference>
<reference key="2">
    <citation type="journal article" date="2008" name="J. Appl. Microbiol.">
        <title>Efficient production and partial characterization of aspartyl aminopeptidase from Aspergillus oryzae.</title>
        <authorList>
            <person name="Kusumoto K.-I."/>
            <person name="Matsushita-Morita M."/>
            <person name="Furukawa I."/>
            <person name="Suzuki S."/>
            <person name="Yamagata Y."/>
            <person name="Koide Y."/>
            <person name="Ishida H."/>
            <person name="Takeuchi M."/>
            <person name="Kashiwagi Y."/>
        </authorList>
    </citation>
    <scope>PROTEIN SEQUENCE OF 11-22</scope>
    <scope>CATALYTIC ACTIVITY</scope>
    <scope>COFACTOR</scope>
    <scope>ACTIVITY REGULATION</scope>
    <scope>BIOPHYSICOCHEMICAL PROPERTIES</scope>
    <scope>SUBUNIT</scope>
    <source>
        <strain>ATCC 42149 / RIB 40</strain>
    </source>
</reference>
<reference key="3">
    <citation type="journal article" date="2007" name="Biosci. Biotechnol. Biochem.">
        <title>Characterization of Aspergillus oryzae aspartyl aminopeptidase expressed in Escherichia coli.</title>
        <authorList>
            <person name="Watanabe J."/>
            <person name="Tanaka H."/>
            <person name="Akagawa T."/>
            <person name="Mogi Y."/>
            <person name="Yamazaki T."/>
        </authorList>
    </citation>
    <scope>CHARACTERIZATION</scope>
    <scope>BIOPHYSICOCHEMICAL PROPERTIES</scope>
</reference>
<keyword id="KW-0031">Aminopeptidase</keyword>
<keyword id="KW-0903">Direct protein sequencing</keyword>
<keyword id="KW-0378">Hydrolase</keyword>
<keyword id="KW-0479">Metal-binding</keyword>
<keyword id="KW-0482">Metalloprotease</keyword>
<keyword id="KW-0645">Protease</keyword>
<keyword id="KW-1185">Reference proteome</keyword>
<keyword id="KW-0862">Zinc</keyword>
<dbReference type="EC" id="3.4.11.21"/>
<dbReference type="EMBL" id="BA000049">
    <property type="protein sequence ID" value="BAE56368.1"/>
    <property type="molecule type" value="Genomic_DNA"/>
</dbReference>
<dbReference type="RefSeq" id="XP_001818370.1">
    <property type="nucleotide sequence ID" value="XM_001818318.2"/>
</dbReference>
<dbReference type="SMR" id="Q2UPZ7"/>
<dbReference type="STRING" id="510516.Q2UPZ7"/>
<dbReference type="EnsemblFungi" id="BAE56368">
    <property type="protein sequence ID" value="BAE56368"/>
    <property type="gene ID" value="AO090005001447"/>
</dbReference>
<dbReference type="GeneID" id="5990315"/>
<dbReference type="KEGG" id="aor:AO090005001447"/>
<dbReference type="VEuPathDB" id="FungiDB:AO090005001447"/>
<dbReference type="HOGENOM" id="CLU_019532_2_0_1"/>
<dbReference type="OMA" id="GPILKVN"/>
<dbReference type="OrthoDB" id="18493at5052"/>
<dbReference type="BRENDA" id="3.4.11.21">
    <property type="organism ID" value="522"/>
</dbReference>
<dbReference type="SABIO-RK" id="Q2UPZ7"/>
<dbReference type="Proteomes" id="UP000006564">
    <property type="component" value="Chromosome 1"/>
</dbReference>
<dbReference type="GO" id="GO:0000324">
    <property type="term" value="C:fungal-type vacuole"/>
    <property type="evidence" value="ECO:0007669"/>
    <property type="project" value="TreeGrafter"/>
</dbReference>
<dbReference type="GO" id="GO:0070006">
    <property type="term" value="F:metalloaminopeptidase activity"/>
    <property type="evidence" value="ECO:0007669"/>
    <property type="project" value="TreeGrafter"/>
</dbReference>
<dbReference type="GO" id="GO:0008270">
    <property type="term" value="F:zinc ion binding"/>
    <property type="evidence" value="ECO:0007669"/>
    <property type="project" value="InterPro"/>
</dbReference>
<dbReference type="GO" id="GO:0006508">
    <property type="term" value="P:proteolysis"/>
    <property type="evidence" value="ECO:0007669"/>
    <property type="project" value="UniProtKB-KW"/>
</dbReference>
<dbReference type="CDD" id="cd05658">
    <property type="entry name" value="M18_DAP"/>
    <property type="match status" value="1"/>
</dbReference>
<dbReference type="FunFam" id="2.30.250.10:FF:000001">
    <property type="entry name" value="Aspartyl aminopeptidase 1"/>
    <property type="match status" value="1"/>
</dbReference>
<dbReference type="Gene3D" id="2.30.250.10">
    <property type="entry name" value="Aminopeptidase i, Domain 2"/>
    <property type="match status" value="1"/>
</dbReference>
<dbReference type="Gene3D" id="3.40.630.10">
    <property type="entry name" value="Zn peptidases"/>
    <property type="match status" value="1"/>
</dbReference>
<dbReference type="InterPro" id="IPR001948">
    <property type="entry name" value="Peptidase_M18"/>
</dbReference>
<dbReference type="InterPro" id="IPR023358">
    <property type="entry name" value="Peptidase_M18_dom2"/>
</dbReference>
<dbReference type="NCBIfam" id="NF002759">
    <property type="entry name" value="PRK02813.1"/>
    <property type="match status" value="1"/>
</dbReference>
<dbReference type="PANTHER" id="PTHR28570">
    <property type="entry name" value="ASPARTYL AMINOPEPTIDASE"/>
    <property type="match status" value="1"/>
</dbReference>
<dbReference type="PANTHER" id="PTHR28570:SF3">
    <property type="entry name" value="ASPARTYL AMINOPEPTIDASE"/>
    <property type="match status" value="1"/>
</dbReference>
<dbReference type="Pfam" id="PF02127">
    <property type="entry name" value="Peptidase_M18"/>
    <property type="match status" value="1"/>
</dbReference>
<dbReference type="PRINTS" id="PR00932">
    <property type="entry name" value="AMINO1PTASE"/>
</dbReference>
<dbReference type="SUPFAM" id="SSF101821">
    <property type="entry name" value="Aminopeptidase/glucanase lid domain"/>
    <property type="match status" value="1"/>
</dbReference>
<dbReference type="SUPFAM" id="SSF53187">
    <property type="entry name" value="Zn-dependent exopeptidases"/>
    <property type="match status" value="1"/>
</dbReference>
<name>DNPEP_ASPOR</name>
<evidence type="ECO:0000250" key="1"/>
<evidence type="ECO:0000269" key="2">
    <source>
    </source>
</evidence>
<evidence type="ECO:0000269" key="3">
    <source>
    </source>
</evidence>
<evidence type="ECO:0000305" key="4"/>
<feature type="chain" id="PRO_0000389137" description="Aspartyl aminopeptidase">
    <location>
        <begin position="1"/>
        <end position="498"/>
    </location>
</feature>
<feature type="binding site" evidence="1">
    <location>
        <position position="91"/>
    </location>
    <ligand>
        <name>Zn(2+)</name>
        <dbReference type="ChEBI" id="CHEBI:29105"/>
        <label>1</label>
    </ligand>
</feature>
<feature type="binding site" evidence="1">
    <location>
        <position position="166"/>
    </location>
    <ligand>
        <name>substrate</name>
    </ligand>
</feature>
<feature type="binding site" evidence="1">
    <location>
        <position position="274"/>
    </location>
    <ligand>
        <name>Zn(2+)</name>
        <dbReference type="ChEBI" id="CHEBI:29105"/>
        <label>1</label>
    </ligand>
</feature>
<feature type="binding site" evidence="1">
    <location>
        <position position="274"/>
    </location>
    <ligand>
        <name>Zn(2+)</name>
        <dbReference type="ChEBI" id="CHEBI:29105"/>
        <label>2</label>
    </ligand>
</feature>
<feature type="binding site" evidence="1">
    <location>
        <position position="311"/>
    </location>
    <ligand>
        <name>substrate</name>
    </ligand>
</feature>
<feature type="binding site" evidence="1">
    <location>
        <position position="312"/>
    </location>
    <ligand>
        <name>Zn(2+)</name>
        <dbReference type="ChEBI" id="CHEBI:29105"/>
        <label>2</label>
    </ligand>
</feature>
<feature type="binding site" evidence="1">
    <location>
        <position position="363"/>
    </location>
    <ligand>
        <name>substrate</name>
    </ligand>
</feature>
<feature type="binding site" evidence="1">
    <location>
        <position position="363"/>
    </location>
    <ligand>
        <name>Zn(2+)</name>
        <dbReference type="ChEBI" id="CHEBI:29105"/>
        <label>1</label>
    </ligand>
</feature>
<feature type="binding site" evidence="1">
    <location>
        <position position="366"/>
    </location>
    <ligand>
        <name>substrate</name>
    </ligand>
</feature>
<feature type="binding site" evidence="1">
    <location>
        <position position="391"/>
    </location>
    <ligand>
        <name>substrate</name>
    </ligand>
</feature>
<feature type="binding site" evidence="1">
    <location>
        <position position="398"/>
    </location>
    <ligand>
        <name>substrate</name>
    </ligand>
</feature>
<feature type="binding site" evidence="1">
    <location>
        <position position="463"/>
    </location>
    <ligand>
        <name>Zn(2+)</name>
        <dbReference type="ChEBI" id="CHEBI:29105"/>
        <label>2</label>
    </ligand>
</feature>